<sequence length="512" mass="58080">MKIRSQVGMVLNLDKCIGCHTCSVTCKNVWTSREGVEYAWFNNVETKPGQGFPTDWENQEKYKGGWIRKINGKLQPRMGNRAMLLGKIFANPHLPGIDDYYEPFDFDYQNLHTAPEGSKSQPIARPRSLITGERMAKIEKGPNWEDDLGGEFDKLAKDKNFDNIQKAMYSQFENTFMMYLPRLCEHCLNPACVATCPSGAIYKREEDGIVLIDQDKCRGWRMCITGCPYKKIYFNWKSGKSEKCIFCYPRIEAGQPTVCSETCVGRIRYLGVLLYDADAIERAASTENEKDLYQRQLDVFLDPNDPKVIEQAIKDGIPLSVIEAAQQSPVYKMAMEWKLALPLHPEYRTLPMVWYVPPLSPIQSAADAGELGSNGILPDVESLRIPVQYLANLLTAGDTKPILRALKRMLAMRHYKRAETVDGKVDTRALEEVGLTEAQAQEMYRYLAIANYEDRFVVPSSHRELAREAFPEKNGCGFTFGDGCHGSDTKFNLFNSRRIDAIDVTSKTEPHP</sequence>
<evidence type="ECO:0000250" key="1"/>
<evidence type="ECO:0000250" key="2">
    <source>
        <dbReference type="UniProtKB" id="P11349"/>
    </source>
</evidence>
<evidence type="ECO:0000255" key="3">
    <source>
        <dbReference type="PROSITE-ProRule" id="PRU00711"/>
    </source>
</evidence>
<evidence type="ECO:0000305" key="4"/>
<keyword id="KW-0003">3Fe-4S</keyword>
<keyword id="KW-0004">4Fe-4S</keyword>
<keyword id="KW-1003">Cell membrane</keyword>
<keyword id="KW-0249">Electron transport</keyword>
<keyword id="KW-0408">Iron</keyword>
<keyword id="KW-0411">Iron-sulfur</keyword>
<keyword id="KW-0472">Membrane</keyword>
<keyword id="KW-0479">Metal-binding</keyword>
<keyword id="KW-0534">Nitrate assimilation</keyword>
<keyword id="KW-0560">Oxidoreductase</keyword>
<keyword id="KW-1185">Reference proteome</keyword>
<keyword id="KW-0677">Repeat</keyword>
<keyword id="KW-0813">Transport</keyword>
<comment type="function">
    <text evidence="1">The nitrate reductase enzyme complex allows S.flexneri to use nitrate as an electron acceptor during anaerobic growth. The beta chain is an electron transfer unit containing four cysteine clusters involved in the formation of iron-sulfur centers. Electrons are transferred from the gamma chain to the molybdenum cofactor of the alpha subunit.</text>
</comment>
<comment type="catalytic activity">
    <reaction>
        <text>nitrate + a quinol = a quinone + nitrite + H2O</text>
        <dbReference type="Rhea" id="RHEA:56144"/>
        <dbReference type="ChEBI" id="CHEBI:15377"/>
        <dbReference type="ChEBI" id="CHEBI:16301"/>
        <dbReference type="ChEBI" id="CHEBI:17632"/>
        <dbReference type="ChEBI" id="CHEBI:24646"/>
        <dbReference type="ChEBI" id="CHEBI:132124"/>
        <dbReference type="EC" id="1.7.5.1"/>
    </reaction>
</comment>
<comment type="cofactor">
    <cofactor evidence="2">
        <name>[4Fe-4S] cluster</name>
        <dbReference type="ChEBI" id="CHEBI:49883"/>
    </cofactor>
    <text evidence="2">Binds 3 [4Fe-4S] clusters per subunit.</text>
</comment>
<comment type="cofactor">
    <cofactor evidence="2">
        <name>[3Fe-4S] cluster</name>
        <dbReference type="ChEBI" id="CHEBI:21137"/>
    </cofactor>
    <text evidence="2">Binds 1 [3Fe-4S] cluster per subunit.</text>
</comment>
<comment type="subunit">
    <text evidence="2">Dimer of heterotrimers each composed of an alpha, a beta and a gamma chain. Alpha and beta are catalytic chains; gamma chains are involved in binding the enzyme complex to the cytoplasmic membrane (By similarity).</text>
</comment>
<comment type="subcellular location">
    <subcellularLocation>
        <location evidence="1">Cell membrane</location>
        <topology evidence="1">Peripheral membrane protein</topology>
    </subcellularLocation>
</comment>
<proteinExistence type="inferred from homology"/>
<protein>
    <recommendedName>
        <fullName>Respiratory nitrate reductase 1 beta chain</fullName>
        <ecNumber>1.7.5.1</ecNumber>
    </recommendedName>
</protein>
<accession>Q83RN5</accession>
<dbReference type="EC" id="1.7.5.1"/>
<dbReference type="EMBL" id="AE005674">
    <property type="protein sequence ID" value="AAN42841.1"/>
    <property type="molecule type" value="Genomic_DNA"/>
</dbReference>
<dbReference type="EMBL" id="AE014073">
    <property type="protein sequence ID" value="AAP16727.1"/>
    <property type="molecule type" value="Genomic_DNA"/>
</dbReference>
<dbReference type="RefSeq" id="NP_707134.1">
    <property type="nucleotide sequence ID" value="NC_004337.2"/>
</dbReference>
<dbReference type="RefSeq" id="WP_000702649.1">
    <property type="nucleotide sequence ID" value="NZ_CP123365.1"/>
</dbReference>
<dbReference type="SMR" id="Q83RN5"/>
<dbReference type="STRING" id="198214.SF1228"/>
<dbReference type="PaxDb" id="198214-SF1228"/>
<dbReference type="GeneID" id="1024183"/>
<dbReference type="KEGG" id="sfl:SF1228"/>
<dbReference type="KEGG" id="sfx:S1312"/>
<dbReference type="PATRIC" id="fig|198214.7.peg.1447"/>
<dbReference type="HOGENOM" id="CLU_043374_5_2_6"/>
<dbReference type="Proteomes" id="UP000001006">
    <property type="component" value="Chromosome"/>
</dbReference>
<dbReference type="Proteomes" id="UP000002673">
    <property type="component" value="Chromosome"/>
</dbReference>
<dbReference type="GO" id="GO:0009325">
    <property type="term" value="C:nitrate reductase complex"/>
    <property type="evidence" value="ECO:0007669"/>
    <property type="project" value="InterPro"/>
</dbReference>
<dbReference type="GO" id="GO:0005886">
    <property type="term" value="C:plasma membrane"/>
    <property type="evidence" value="ECO:0007669"/>
    <property type="project" value="UniProtKB-SubCell"/>
</dbReference>
<dbReference type="GO" id="GO:0051538">
    <property type="term" value="F:3 iron, 4 sulfur cluster binding"/>
    <property type="evidence" value="ECO:0007669"/>
    <property type="project" value="UniProtKB-KW"/>
</dbReference>
<dbReference type="GO" id="GO:0051539">
    <property type="term" value="F:4 iron, 4 sulfur cluster binding"/>
    <property type="evidence" value="ECO:0007669"/>
    <property type="project" value="UniProtKB-KW"/>
</dbReference>
<dbReference type="GO" id="GO:0009055">
    <property type="term" value="F:electron transfer activity"/>
    <property type="evidence" value="ECO:0007669"/>
    <property type="project" value="TreeGrafter"/>
</dbReference>
<dbReference type="GO" id="GO:0046872">
    <property type="term" value="F:metal ion binding"/>
    <property type="evidence" value="ECO:0007669"/>
    <property type="project" value="UniProtKB-KW"/>
</dbReference>
<dbReference type="GO" id="GO:0160182">
    <property type="term" value="F:nitrate reductase (quinone) activity"/>
    <property type="evidence" value="ECO:0007669"/>
    <property type="project" value="UniProtKB-EC"/>
</dbReference>
<dbReference type="GO" id="GO:0009061">
    <property type="term" value="P:anaerobic respiration"/>
    <property type="evidence" value="ECO:0007669"/>
    <property type="project" value="TreeGrafter"/>
</dbReference>
<dbReference type="GO" id="GO:0042128">
    <property type="term" value="P:nitrate assimilation"/>
    <property type="evidence" value="ECO:0007669"/>
    <property type="project" value="UniProtKB-KW"/>
</dbReference>
<dbReference type="CDD" id="cd10557">
    <property type="entry name" value="NarH_beta-like"/>
    <property type="match status" value="1"/>
</dbReference>
<dbReference type="FunFam" id="3.30.70.20:FF:000005">
    <property type="entry name" value="Respiratory nitrate reductase beta subunit"/>
    <property type="match status" value="1"/>
</dbReference>
<dbReference type="FunFam" id="3.30.70.20:FF:000008">
    <property type="entry name" value="Respiratory nitrate reductase beta subunit"/>
    <property type="match status" value="1"/>
</dbReference>
<dbReference type="FunFam" id="3.30.70.20:FF:000010">
    <property type="entry name" value="Respiratory nitrate reductase beta subunit"/>
    <property type="match status" value="1"/>
</dbReference>
<dbReference type="FunFam" id="1.10.3650.10:FF:000001">
    <property type="entry name" value="Respiratory nitrate reductase subunit beta"/>
    <property type="match status" value="1"/>
</dbReference>
<dbReference type="Gene3D" id="3.30.70.20">
    <property type="match status" value="3"/>
</dbReference>
<dbReference type="Gene3D" id="1.10.3650.10">
    <property type="entry name" value="nitrate reductase domain like"/>
    <property type="match status" value="1"/>
</dbReference>
<dbReference type="InterPro" id="IPR017896">
    <property type="entry name" value="4Fe4S_Fe-S-bd"/>
</dbReference>
<dbReference type="InterPro" id="IPR029263">
    <property type="entry name" value="Nitr_red_bet_C"/>
</dbReference>
<dbReference type="InterPro" id="IPR038262">
    <property type="entry name" value="Nitr_red_bet_C_sf"/>
</dbReference>
<dbReference type="InterPro" id="IPR006547">
    <property type="entry name" value="NO3_Rdtase_bsu"/>
</dbReference>
<dbReference type="NCBIfam" id="TIGR01660">
    <property type="entry name" value="narH"/>
    <property type="match status" value="1"/>
</dbReference>
<dbReference type="PANTHER" id="PTHR43518">
    <property type="entry name" value="NITRATE REDUCTASE BETA SUBUNIT"/>
    <property type="match status" value="1"/>
</dbReference>
<dbReference type="PANTHER" id="PTHR43518:SF1">
    <property type="entry name" value="RESPIRATORY NITRATE REDUCTASE 1 BETA CHAIN"/>
    <property type="match status" value="1"/>
</dbReference>
<dbReference type="Pfam" id="PF13247">
    <property type="entry name" value="Fer4_11"/>
    <property type="match status" value="1"/>
</dbReference>
<dbReference type="Pfam" id="PF14711">
    <property type="entry name" value="Nitr_red_bet_C"/>
    <property type="match status" value="1"/>
</dbReference>
<dbReference type="SUPFAM" id="SSF54862">
    <property type="entry name" value="4Fe-4S ferredoxins"/>
    <property type="match status" value="1"/>
</dbReference>
<dbReference type="PROSITE" id="PS51379">
    <property type="entry name" value="4FE4S_FER_2"/>
    <property type="match status" value="3"/>
</dbReference>
<name>NARH_SHIFL</name>
<feature type="chain" id="PRO_0000096721" description="Respiratory nitrate reductase 1 beta chain">
    <location>
        <begin position="1"/>
        <end position="512"/>
    </location>
</feature>
<feature type="domain" description="4Fe-4S ferredoxin-type 1" evidence="3">
    <location>
        <begin position="7"/>
        <end position="35"/>
    </location>
</feature>
<feature type="domain" description="4Fe-4S ferredoxin-type 2" evidence="3">
    <location>
        <begin position="175"/>
        <end position="206"/>
    </location>
</feature>
<feature type="domain" description="4Fe-4S ferredoxin-type 3" evidence="3">
    <location>
        <begin position="208"/>
        <end position="237"/>
    </location>
</feature>
<feature type="binding site" evidence="2">
    <location>
        <position position="16"/>
    </location>
    <ligand>
        <name>[4Fe-4S] cluster</name>
        <dbReference type="ChEBI" id="CHEBI:49883"/>
        <label>1</label>
    </ligand>
</feature>
<feature type="binding site" evidence="2">
    <location>
        <position position="19"/>
    </location>
    <ligand>
        <name>[4Fe-4S] cluster</name>
        <dbReference type="ChEBI" id="CHEBI:49883"/>
        <label>1</label>
    </ligand>
</feature>
<feature type="binding site" evidence="2">
    <location>
        <position position="22"/>
    </location>
    <ligand>
        <name>[4Fe-4S] cluster</name>
        <dbReference type="ChEBI" id="CHEBI:49883"/>
        <label>1</label>
    </ligand>
</feature>
<feature type="binding site" evidence="2">
    <location>
        <position position="26"/>
    </location>
    <ligand>
        <name>[4Fe-4S] cluster</name>
        <dbReference type="ChEBI" id="CHEBI:49883"/>
        <label>2</label>
    </ligand>
</feature>
<feature type="binding site" evidence="2">
    <location>
        <position position="184"/>
    </location>
    <ligand>
        <name>[4Fe-4S] cluster</name>
        <dbReference type="ChEBI" id="CHEBI:49883"/>
        <label>3</label>
    </ligand>
</feature>
<feature type="binding site" evidence="2">
    <location>
        <position position="187"/>
    </location>
    <ligand>
        <name>[4Fe-4S] cluster</name>
        <dbReference type="ChEBI" id="CHEBI:49883"/>
        <label>3</label>
    </ligand>
</feature>
<feature type="binding site" evidence="2">
    <location>
        <position position="192"/>
    </location>
    <ligand>
        <name>[4Fe-4S] cluster</name>
        <dbReference type="ChEBI" id="CHEBI:49883"/>
        <label>3</label>
    </ligand>
</feature>
<feature type="binding site" evidence="2">
    <location>
        <position position="196"/>
    </location>
    <ligand>
        <name>[3Fe-4S] cluster</name>
        <dbReference type="ChEBI" id="CHEBI:21137"/>
    </ligand>
</feature>
<feature type="binding site" evidence="2">
    <location>
        <position position="217"/>
    </location>
    <ligand>
        <name>[3Fe-4S] cluster</name>
        <dbReference type="ChEBI" id="CHEBI:21137"/>
    </ligand>
</feature>
<feature type="binding site" evidence="2">
    <location>
        <position position="223"/>
    </location>
    <ligand>
        <name>[3Fe-4S] cluster</name>
        <dbReference type="ChEBI" id="CHEBI:21137"/>
    </ligand>
</feature>
<feature type="binding site" evidence="2">
    <location>
        <position position="227"/>
    </location>
    <ligand>
        <name>[4Fe-4S] cluster</name>
        <dbReference type="ChEBI" id="CHEBI:49883"/>
        <label>3</label>
    </ligand>
</feature>
<feature type="binding site" evidence="2">
    <location>
        <position position="244"/>
    </location>
    <ligand>
        <name>[4Fe-4S] cluster</name>
        <dbReference type="ChEBI" id="CHEBI:49883"/>
        <label>2</label>
    </ligand>
</feature>
<feature type="binding site" evidence="2">
    <location>
        <position position="247"/>
    </location>
    <ligand>
        <name>[4Fe-4S] cluster</name>
        <dbReference type="ChEBI" id="CHEBI:49883"/>
        <label>2</label>
    </ligand>
</feature>
<feature type="binding site" evidence="2">
    <location>
        <position position="259"/>
    </location>
    <ligand>
        <name>[4Fe-4S] cluster</name>
        <dbReference type="ChEBI" id="CHEBI:49883"/>
        <label>2</label>
    </ligand>
</feature>
<feature type="binding site" evidence="2">
    <location>
        <position position="263"/>
    </location>
    <ligand>
        <name>[4Fe-4S] cluster</name>
        <dbReference type="ChEBI" id="CHEBI:49883"/>
        <label>1</label>
    </ligand>
</feature>
<feature type="sequence conflict" description="In Ref. 2; AAP16727." evidence="4" ref="2">
    <original>I</original>
    <variation>V</variation>
    <location>
        <position position="402"/>
    </location>
</feature>
<organism>
    <name type="scientific">Shigella flexneri</name>
    <dbReference type="NCBI Taxonomy" id="623"/>
    <lineage>
        <taxon>Bacteria</taxon>
        <taxon>Pseudomonadati</taxon>
        <taxon>Pseudomonadota</taxon>
        <taxon>Gammaproteobacteria</taxon>
        <taxon>Enterobacterales</taxon>
        <taxon>Enterobacteriaceae</taxon>
        <taxon>Shigella</taxon>
    </lineage>
</organism>
<reference key="1">
    <citation type="journal article" date="2002" name="Nucleic Acids Res.">
        <title>Genome sequence of Shigella flexneri 2a: insights into pathogenicity through comparison with genomes of Escherichia coli K12 and O157.</title>
        <authorList>
            <person name="Jin Q."/>
            <person name="Yuan Z."/>
            <person name="Xu J."/>
            <person name="Wang Y."/>
            <person name="Shen Y."/>
            <person name="Lu W."/>
            <person name="Wang J."/>
            <person name="Liu H."/>
            <person name="Yang J."/>
            <person name="Yang F."/>
            <person name="Zhang X."/>
            <person name="Zhang J."/>
            <person name="Yang G."/>
            <person name="Wu H."/>
            <person name="Qu D."/>
            <person name="Dong J."/>
            <person name="Sun L."/>
            <person name="Xue Y."/>
            <person name="Zhao A."/>
            <person name="Gao Y."/>
            <person name="Zhu J."/>
            <person name="Kan B."/>
            <person name="Ding K."/>
            <person name="Chen S."/>
            <person name="Cheng H."/>
            <person name="Yao Z."/>
            <person name="He B."/>
            <person name="Chen R."/>
            <person name="Ma D."/>
            <person name="Qiang B."/>
            <person name="Wen Y."/>
            <person name="Hou Y."/>
            <person name="Yu J."/>
        </authorList>
    </citation>
    <scope>NUCLEOTIDE SEQUENCE [LARGE SCALE GENOMIC DNA]</scope>
    <source>
        <strain>301 / Serotype 2a</strain>
    </source>
</reference>
<reference key="2">
    <citation type="journal article" date="2003" name="Infect. Immun.">
        <title>Complete genome sequence and comparative genomics of Shigella flexneri serotype 2a strain 2457T.</title>
        <authorList>
            <person name="Wei J."/>
            <person name="Goldberg M.B."/>
            <person name="Burland V."/>
            <person name="Venkatesan M.M."/>
            <person name="Deng W."/>
            <person name="Fournier G."/>
            <person name="Mayhew G.F."/>
            <person name="Plunkett G. III"/>
            <person name="Rose D.J."/>
            <person name="Darling A."/>
            <person name="Mau B."/>
            <person name="Perna N.T."/>
            <person name="Payne S.M."/>
            <person name="Runyen-Janecky L.J."/>
            <person name="Zhou S."/>
            <person name="Schwartz D.C."/>
            <person name="Blattner F.R."/>
        </authorList>
    </citation>
    <scope>NUCLEOTIDE SEQUENCE [LARGE SCALE GENOMIC DNA]</scope>
    <source>
        <strain>ATCC 700930 / 2457T / Serotype 2a</strain>
    </source>
</reference>
<gene>
    <name type="primary">narH</name>
    <name type="ordered locus">SF1228</name>
    <name type="ordered locus">S1312</name>
</gene>